<gene>
    <name evidence="1" type="primary">pdxH</name>
    <name type="ordered locus">Sfri_1702</name>
</gene>
<reference key="1">
    <citation type="submission" date="2006-08" db="EMBL/GenBank/DDBJ databases">
        <title>Complete sequence of Shewanella frigidimarina NCIMB 400.</title>
        <authorList>
            <consortium name="US DOE Joint Genome Institute"/>
            <person name="Copeland A."/>
            <person name="Lucas S."/>
            <person name="Lapidus A."/>
            <person name="Barry K."/>
            <person name="Detter J.C."/>
            <person name="Glavina del Rio T."/>
            <person name="Hammon N."/>
            <person name="Israni S."/>
            <person name="Dalin E."/>
            <person name="Tice H."/>
            <person name="Pitluck S."/>
            <person name="Fredrickson J.K."/>
            <person name="Kolker E."/>
            <person name="McCuel L.A."/>
            <person name="DiChristina T."/>
            <person name="Nealson K.H."/>
            <person name="Newman D."/>
            <person name="Tiedje J.M."/>
            <person name="Zhou J."/>
            <person name="Romine M.F."/>
            <person name="Culley D.E."/>
            <person name="Serres M."/>
            <person name="Chertkov O."/>
            <person name="Brettin T."/>
            <person name="Bruce D."/>
            <person name="Han C."/>
            <person name="Tapia R."/>
            <person name="Gilna P."/>
            <person name="Schmutz J."/>
            <person name="Larimer F."/>
            <person name="Land M."/>
            <person name="Hauser L."/>
            <person name="Kyrpides N."/>
            <person name="Mikhailova N."/>
            <person name="Richardson P."/>
        </authorList>
    </citation>
    <scope>NUCLEOTIDE SEQUENCE [LARGE SCALE GENOMIC DNA]</scope>
    <source>
        <strain>NCIMB 400</strain>
    </source>
</reference>
<sequence>MSDLSDIRREYTQGGLRRANLPVNPMDLFEQWMQQAKDAQLSDPTAMCVATVDEDGQPFQRIVLLKKFDDNGFVFFTNLESRKAKQIATNSKISLLFPWHPLERQVAVLGEAEPLSMLDVAKYFMSRPKDSQIAAWVSKQSSKISARQALEGKFAEMKAKFAQGEVPLPKFWGGYLVRPASIEFWQGGEHRLHDRFIYTKTDADWNIDRLAP</sequence>
<dbReference type="EC" id="1.4.3.5" evidence="1"/>
<dbReference type="EMBL" id="CP000447">
    <property type="protein sequence ID" value="ABI71552.1"/>
    <property type="molecule type" value="Genomic_DNA"/>
</dbReference>
<dbReference type="RefSeq" id="WP_011637168.1">
    <property type="nucleotide sequence ID" value="NC_008345.1"/>
</dbReference>
<dbReference type="SMR" id="Q083L3"/>
<dbReference type="STRING" id="318167.Sfri_1702"/>
<dbReference type="KEGG" id="sfr:Sfri_1702"/>
<dbReference type="eggNOG" id="COG0259">
    <property type="taxonomic scope" value="Bacteria"/>
</dbReference>
<dbReference type="HOGENOM" id="CLU_032263_2_2_6"/>
<dbReference type="OrthoDB" id="9780392at2"/>
<dbReference type="UniPathway" id="UPA01068">
    <property type="reaction ID" value="UER00304"/>
</dbReference>
<dbReference type="UniPathway" id="UPA01068">
    <property type="reaction ID" value="UER00305"/>
</dbReference>
<dbReference type="Proteomes" id="UP000000684">
    <property type="component" value="Chromosome"/>
</dbReference>
<dbReference type="GO" id="GO:0010181">
    <property type="term" value="F:FMN binding"/>
    <property type="evidence" value="ECO:0007669"/>
    <property type="project" value="UniProtKB-UniRule"/>
</dbReference>
<dbReference type="GO" id="GO:0004733">
    <property type="term" value="F:pyridoxamine phosphate oxidase activity"/>
    <property type="evidence" value="ECO:0007669"/>
    <property type="project" value="UniProtKB-UniRule"/>
</dbReference>
<dbReference type="GO" id="GO:0008615">
    <property type="term" value="P:pyridoxine biosynthetic process"/>
    <property type="evidence" value="ECO:0007669"/>
    <property type="project" value="UniProtKB-KW"/>
</dbReference>
<dbReference type="Gene3D" id="2.30.110.10">
    <property type="entry name" value="Electron Transport, Fmn-binding Protein, Chain A"/>
    <property type="match status" value="1"/>
</dbReference>
<dbReference type="HAMAP" id="MF_01629">
    <property type="entry name" value="PdxH"/>
    <property type="match status" value="1"/>
</dbReference>
<dbReference type="InterPro" id="IPR000659">
    <property type="entry name" value="Pyridox_Oxase"/>
</dbReference>
<dbReference type="InterPro" id="IPR019740">
    <property type="entry name" value="Pyridox_Oxase_CS"/>
</dbReference>
<dbReference type="InterPro" id="IPR011576">
    <property type="entry name" value="Pyridox_Oxase_N"/>
</dbReference>
<dbReference type="InterPro" id="IPR019576">
    <property type="entry name" value="Pyridoxamine_oxidase_dimer_C"/>
</dbReference>
<dbReference type="InterPro" id="IPR012349">
    <property type="entry name" value="Split_barrel_FMN-bd"/>
</dbReference>
<dbReference type="NCBIfam" id="TIGR00558">
    <property type="entry name" value="pdxH"/>
    <property type="match status" value="1"/>
</dbReference>
<dbReference type="NCBIfam" id="NF004231">
    <property type="entry name" value="PRK05679.1"/>
    <property type="match status" value="1"/>
</dbReference>
<dbReference type="PANTHER" id="PTHR10851:SF0">
    <property type="entry name" value="PYRIDOXINE-5'-PHOSPHATE OXIDASE"/>
    <property type="match status" value="1"/>
</dbReference>
<dbReference type="PANTHER" id="PTHR10851">
    <property type="entry name" value="PYRIDOXINE-5-PHOSPHATE OXIDASE"/>
    <property type="match status" value="1"/>
</dbReference>
<dbReference type="Pfam" id="PF10590">
    <property type="entry name" value="PNP_phzG_C"/>
    <property type="match status" value="1"/>
</dbReference>
<dbReference type="Pfam" id="PF01243">
    <property type="entry name" value="PNPOx_N"/>
    <property type="match status" value="1"/>
</dbReference>
<dbReference type="PIRSF" id="PIRSF000190">
    <property type="entry name" value="Pyd_amn-ph_oxd"/>
    <property type="match status" value="1"/>
</dbReference>
<dbReference type="SUPFAM" id="SSF50475">
    <property type="entry name" value="FMN-binding split barrel"/>
    <property type="match status" value="1"/>
</dbReference>
<dbReference type="PROSITE" id="PS01064">
    <property type="entry name" value="PYRIDOX_OXIDASE"/>
    <property type="match status" value="1"/>
</dbReference>
<keyword id="KW-0285">Flavoprotein</keyword>
<keyword id="KW-0288">FMN</keyword>
<keyword id="KW-0560">Oxidoreductase</keyword>
<keyword id="KW-0664">Pyridoxine biosynthesis</keyword>
<keyword id="KW-1185">Reference proteome</keyword>
<name>PDXH_SHEFN</name>
<organism>
    <name type="scientific">Shewanella frigidimarina (strain NCIMB 400)</name>
    <dbReference type="NCBI Taxonomy" id="318167"/>
    <lineage>
        <taxon>Bacteria</taxon>
        <taxon>Pseudomonadati</taxon>
        <taxon>Pseudomonadota</taxon>
        <taxon>Gammaproteobacteria</taxon>
        <taxon>Alteromonadales</taxon>
        <taxon>Shewanellaceae</taxon>
        <taxon>Shewanella</taxon>
    </lineage>
</organism>
<protein>
    <recommendedName>
        <fullName evidence="1">Pyridoxine/pyridoxamine 5'-phosphate oxidase</fullName>
        <ecNumber evidence="1">1.4.3.5</ecNumber>
    </recommendedName>
    <alternativeName>
        <fullName evidence="1">PNP/PMP oxidase</fullName>
        <shortName evidence="1">PNPOx</shortName>
    </alternativeName>
    <alternativeName>
        <fullName evidence="1">Pyridoxal 5'-phosphate synthase</fullName>
    </alternativeName>
</protein>
<comment type="function">
    <text evidence="1">Catalyzes the oxidation of either pyridoxine 5'-phosphate (PNP) or pyridoxamine 5'-phosphate (PMP) into pyridoxal 5'-phosphate (PLP).</text>
</comment>
<comment type="catalytic activity">
    <reaction evidence="1">
        <text>pyridoxamine 5'-phosphate + O2 + H2O = pyridoxal 5'-phosphate + H2O2 + NH4(+)</text>
        <dbReference type="Rhea" id="RHEA:15817"/>
        <dbReference type="ChEBI" id="CHEBI:15377"/>
        <dbReference type="ChEBI" id="CHEBI:15379"/>
        <dbReference type="ChEBI" id="CHEBI:16240"/>
        <dbReference type="ChEBI" id="CHEBI:28938"/>
        <dbReference type="ChEBI" id="CHEBI:58451"/>
        <dbReference type="ChEBI" id="CHEBI:597326"/>
        <dbReference type="EC" id="1.4.3.5"/>
    </reaction>
</comment>
<comment type="catalytic activity">
    <reaction evidence="1">
        <text>pyridoxine 5'-phosphate + O2 = pyridoxal 5'-phosphate + H2O2</text>
        <dbReference type="Rhea" id="RHEA:15149"/>
        <dbReference type="ChEBI" id="CHEBI:15379"/>
        <dbReference type="ChEBI" id="CHEBI:16240"/>
        <dbReference type="ChEBI" id="CHEBI:58589"/>
        <dbReference type="ChEBI" id="CHEBI:597326"/>
        <dbReference type="EC" id="1.4.3.5"/>
    </reaction>
</comment>
<comment type="cofactor">
    <cofactor evidence="1">
        <name>FMN</name>
        <dbReference type="ChEBI" id="CHEBI:58210"/>
    </cofactor>
    <text evidence="1">Binds 1 FMN per subunit.</text>
</comment>
<comment type="pathway">
    <text evidence="1">Cofactor metabolism; pyridoxal 5'-phosphate salvage; pyridoxal 5'-phosphate from pyridoxamine 5'-phosphate: step 1/1.</text>
</comment>
<comment type="pathway">
    <text evidence="1">Cofactor metabolism; pyridoxal 5'-phosphate salvage; pyridoxal 5'-phosphate from pyridoxine 5'-phosphate: step 1/1.</text>
</comment>
<comment type="subunit">
    <text evidence="1">Homodimer.</text>
</comment>
<comment type="similarity">
    <text evidence="1">Belongs to the pyridoxamine 5'-phosphate oxidase family.</text>
</comment>
<evidence type="ECO:0000255" key="1">
    <source>
        <dbReference type="HAMAP-Rule" id="MF_01629"/>
    </source>
</evidence>
<feature type="chain" id="PRO_0000292327" description="Pyridoxine/pyridoxamine 5'-phosphate oxidase">
    <location>
        <begin position="1"/>
        <end position="212"/>
    </location>
</feature>
<feature type="binding site" evidence="1">
    <location>
        <begin position="8"/>
        <end position="11"/>
    </location>
    <ligand>
        <name>substrate</name>
    </ligand>
</feature>
<feature type="binding site" evidence="1">
    <location>
        <begin position="61"/>
        <end position="66"/>
    </location>
    <ligand>
        <name>FMN</name>
        <dbReference type="ChEBI" id="CHEBI:58210"/>
    </ligand>
</feature>
<feature type="binding site" evidence="1">
    <location>
        <position position="66"/>
    </location>
    <ligand>
        <name>substrate</name>
    </ligand>
</feature>
<feature type="binding site" evidence="1">
    <location>
        <begin position="76"/>
        <end position="77"/>
    </location>
    <ligand>
        <name>FMN</name>
        <dbReference type="ChEBI" id="CHEBI:58210"/>
    </ligand>
</feature>
<feature type="binding site" evidence="1">
    <location>
        <position position="82"/>
    </location>
    <ligand>
        <name>FMN</name>
        <dbReference type="ChEBI" id="CHEBI:58210"/>
    </ligand>
</feature>
<feature type="binding site" evidence="1">
    <location>
        <position position="83"/>
    </location>
    <ligand>
        <name>FMN</name>
        <dbReference type="ChEBI" id="CHEBI:58210"/>
    </ligand>
</feature>
<feature type="binding site" evidence="1">
    <location>
        <position position="105"/>
    </location>
    <ligand>
        <name>FMN</name>
        <dbReference type="ChEBI" id="CHEBI:58210"/>
    </ligand>
</feature>
<feature type="binding site" evidence="1">
    <location>
        <position position="123"/>
    </location>
    <ligand>
        <name>substrate</name>
    </ligand>
</feature>
<feature type="binding site" evidence="1">
    <location>
        <position position="127"/>
    </location>
    <ligand>
        <name>substrate</name>
    </ligand>
</feature>
<feature type="binding site" evidence="1">
    <location>
        <position position="131"/>
    </location>
    <ligand>
        <name>substrate</name>
    </ligand>
</feature>
<feature type="binding site" evidence="1">
    <location>
        <begin position="140"/>
        <end position="141"/>
    </location>
    <ligand>
        <name>FMN</name>
        <dbReference type="ChEBI" id="CHEBI:58210"/>
    </ligand>
</feature>
<feature type="binding site" evidence="1">
    <location>
        <position position="185"/>
    </location>
    <ligand>
        <name>FMN</name>
        <dbReference type="ChEBI" id="CHEBI:58210"/>
    </ligand>
</feature>
<feature type="binding site" evidence="1">
    <location>
        <begin position="191"/>
        <end position="193"/>
    </location>
    <ligand>
        <name>substrate</name>
    </ligand>
</feature>
<feature type="binding site" evidence="1">
    <location>
        <position position="195"/>
    </location>
    <ligand>
        <name>FMN</name>
        <dbReference type="ChEBI" id="CHEBI:58210"/>
    </ligand>
</feature>
<proteinExistence type="inferred from homology"/>
<accession>Q083L3</accession>